<sequence>RFKKIRRLGALPGFTSKRPRSGSDLKNQLRSGKKSQYRIRLEEKQKLRFHYGLTERQLLKYVHIAGKAKGSTGQILLQLLEMRLDNILFRLGMASTIPGARQLVNHRHILVNDRIVDIPSYRCKPRDIITTKNKQRSKALIQNYIASSPHHEELPNHLTIDPFQYKGLVNQIIDNKWIGLKIN</sequence>
<protein>
    <recommendedName>
        <fullName evidence="2">Small ribosomal subunit protein uS4c</fullName>
    </recommendedName>
    <alternativeName>
        <fullName>30S ribosomal protein S4, chloroplastic</fullName>
    </alternativeName>
</protein>
<proteinExistence type="inferred from homology"/>
<evidence type="ECO:0000250" key="1"/>
<evidence type="ECO:0000305" key="2"/>
<geneLocation type="chloroplast"/>
<gene>
    <name type="primary">rps4</name>
</gene>
<accession>P69633</accession>
<accession>O19815</accession>
<accession>O19983</accession>
<comment type="function">
    <text evidence="1">One of the primary rRNA binding proteins, it binds directly to 16S rRNA where it nucleates assembly of the body of the 30S subunit.</text>
</comment>
<comment type="function">
    <text evidence="1">With S5 and S12 plays an important role in translational accuracy.</text>
</comment>
<comment type="subunit">
    <text evidence="1">Part of the 30S ribosomal subunit. Contacts protein S5. The interaction surface between S4 and S5 is involved in control of translational fidelity (By similarity).</text>
</comment>
<comment type="subcellular location">
    <subcellularLocation>
        <location>Plastid</location>
        <location>Chloroplast</location>
    </subcellularLocation>
</comment>
<comment type="similarity">
    <text evidence="2">Belongs to the universal ribosomal protein uS4 family.</text>
</comment>
<organism>
    <name type="scientific">Aristea platycaulis</name>
    <dbReference type="NCBI Taxonomy" id="58984"/>
    <lineage>
        <taxon>Eukaryota</taxon>
        <taxon>Viridiplantae</taxon>
        <taxon>Streptophyta</taxon>
        <taxon>Embryophyta</taxon>
        <taxon>Tracheophyta</taxon>
        <taxon>Spermatophyta</taxon>
        <taxon>Magnoliopsida</taxon>
        <taxon>Liliopsida</taxon>
        <taxon>Asparagales</taxon>
        <taxon>Iridaceae</taxon>
        <taxon>Aristeoideae</taxon>
        <taxon>Aristea</taxon>
    </lineage>
</organism>
<keyword id="KW-0150">Chloroplast</keyword>
<keyword id="KW-0934">Plastid</keyword>
<keyword id="KW-0687">Ribonucleoprotein</keyword>
<keyword id="KW-0689">Ribosomal protein</keyword>
<keyword id="KW-0694">RNA-binding</keyword>
<keyword id="KW-0699">rRNA-binding</keyword>
<reference key="1">
    <citation type="journal article" date="1997" name="Plant Syst. Evol.">
        <title>Phylogenetic analysis of Iridaceae with parsimony and distance methods using the plastid gene rps4.</title>
        <authorList>
            <person name="Souza-Chies T.T."/>
            <person name="Bittar G."/>
            <person name="Nadot S."/>
            <person name="Carter L."/>
            <person name="Besin E."/>
            <person name="Lejeune B.P."/>
        </authorList>
    </citation>
    <scope>NUCLEOTIDE SEQUENCE [GENOMIC DNA]</scope>
</reference>
<feature type="chain" id="PRO_0000132537" description="Small ribosomal subunit protein uS4c">
    <location>
        <begin position="1" status="less than"/>
        <end position="183" status="greater than"/>
    </location>
</feature>
<feature type="domain" description="S4 RNA-binding">
    <location>
        <begin position="82"/>
        <end position="143"/>
    </location>
</feature>
<feature type="non-terminal residue">
    <location>
        <position position="1"/>
    </location>
</feature>
<feature type="non-terminal residue">
    <location>
        <position position="183"/>
    </location>
</feature>
<dbReference type="EMBL" id="Z68232">
    <property type="protein sequence ID" value="CAA92530.1"/>
    <property type="molecule type" value="Genomic_DNA"/>
</dbReference>
<dbReference type="SMR" id="P69633"/>
<dbReference type="GO" id="GO:0009507">
    <property type="term" value="C:chloroplast"/>
    <property type="evidence" value="ECO:0007669"/>
    <property type="project" value="UniProtKB-SubCell"/>
</dbReference>
<dbReference type="GO" id="GO:0015935">
    <property type="term" value="C:small ribosomal subunit"/>
    <property type="evidence" value="ECO:0007669"/>
    <property type="project" value="InterPro"/>
</dbReference>
<dbReference type="GO" id="GO:0019843">
    <property type="term" value="F:rRNA binding"/>
    <property type="evidence" value="ECO:0007669"/>
    <property type="project" value="UniProtKB-KW"/>
</dbReference>
<dbReference type="GO" id="GO:0003735">
    <property type="term" value="F:structural constituent of ribosome"/>
    <property type="evidence" value="ECO:0007669"/>
    <property type="project" value="InterPro"/>
</dbReference>
<dbReference type="GO" id="GO:0042274">
    <property type="term" value="P:ribosomal small subunit biogenesis"/>
    <property type="evidence" value="ECO:0007669"/>
    <property type="project" value="TreeGrafter"/>
</dbReference>
<dbReference type="GO" id="GO:0006412">
    <property type="term" value="P:translation"/>
    <property type="evidence" value="ECO:0007669"/>
    <property type="project" value="InterPro"/>
</dbReference>
<dbReference type="CDD" id="cd00165">
    <property type="entry name" value="S4"/>
    <property type="match status" value="1"/>
</dbReference>
<dbReference type="FunFam" id="1.10.1050.10:FF:000002">
    <property type="entry name" value="30S ribosomal protein S4, chloroplastic"/>
    <property type="match status" value="1"/>
</dbReference>
<dbReference type="FunFam" id="3.10.290.10:FF:000081">
    <property type="entry name" value="30S ribosomal protein S4, chloroplastic"/>
    <property type="match status" value="1"/>
</dbReference>
<dbReference type="Gene3D" id="1.10.1050.10">
    <property type="entry name" value="Ribosomal Protein S4 Delta 41, Chain A, domain 1"/>
    <property type="match status" value="1"/>
</dbReference>
<dbReference type="Gene3D" id="3.10.290.10">
    <property type="entry name" value="RNA-binding S4 domain"/>
    <property type="match status" value="1"/>
</dbReference>
<dbReference type="HAMAP" id="MF_01306_B">
    <property type="entry name" value="Ribosomal_uS4_B"/>
    <property type="match status" value="1"/>
</dbReference>
<dbReference type="InterPro" id="IPR022801">
    <property type="entry name" value="Ribosomal_uS4"/>
</dbReference>
<dbReference type="InterPro" id="IPR005709">
    <property type="entry name" value="Ribosomal_uS4_bac-type"/>
</dbReference>
<dbReference type="InterPro" id="IPR018079">
    <property type="entry name" value="Ribosomal_uS4_CS"/>
</dbReference>
<dbReference type="InterPro" id="IPR001912">
    <property type="entry name" value="Ribosomal_uS4_N"/>
</dbReference>
<dbReference type="InterPro" id="IPR002942">
    <property type="entry name" value="S4_RNA-bd"/>
</dbReference>
<dbReference type="InterPro" id="IPR036986">
    <property type="entry name" value="S4_RNA-bd_sf"/>
</dbReference>
<dbReference type="NCBIfam" id="NF003717">
    <property type="entry name" value="PRK05327.1"/>
    <property type="match status" value="1"/>
</dbReference>
<dbReference type="NCBIfam" id="TIGR01017">
    <property type="entry name" value="rpsD_bact"/>
    <property type="match status" value="1"/>
</dbReference>
<dbReference type="PANTHER" id="PTHR11831">
    <property type="entry name" value="30S 40S RIBOSOMAL PROTEIN"/>
    <property type="match status" value="1"/>
</dbReference>
<dbReference type="PANTHER" id="PTHR11831:SF4">
    <property type="entry name" value="SMALL RIBOSOMAL SUBUNIT PROTEIN US4M"/>
    <property type="match status" value="1"/>
</dbReference>
<dbReference type="Pfam" id="PF00163">
    <property type="entry name" value="Ribosomal_S4"/>
    <property type="match status" value="1"/>
</dbReference>
<dbReference type="Pfam" id="PF01479">
    <property type="entry name" value="S4"/>
    <property type="match status" value="1"/>
</dbReference>
<dbReference type="SMART" id="SM01390">
    <property type="entry name" value="Ribosomal_S4"/>
    <property type="match status" value="1"/>
</dbReference>
<dbReference type="SMART" id="SM00363">
    <property type="entry name" value="S4"/>
    <property type="match status" value="1"/>
</dbReference>
<dbReference type="SUPFAM" id="SSF55174">
    <property type="entry name" value="Alpha-L RNA-binding motif"/>
    <property type="match status" value="1"/>
</dbReference>
<dbReference type="PROSITE" id="PS00632">
    <property type="entry name" value="RIBOSOMAL_S4"/>
    <property type="match status" value="1"/>
</dbReference>
<dbReference type="PROSITE" id="PS50889">
    <property type="entry name" value="S4"/>
    <property type="match status" value="1"/>
</dbReference>
<name>RR4_ARIPL</name>